<evidence type="ECO:0000255" key="1">
    <source>
        <dbReference type="HAMAP-Rule" id="MF_03111"/>
    </source>
</evidence>
<proteinExistence type="inferred from homology"/>
<protein>
    <recommendedName>
        <fullName>Ubiquinone biosynthesis protein COQ4 homolog 2, mitochondrial</fullName>
    </recommendedName>
    <alternativeName>
        <fullName>4-hydroxy-3-methoxy-5-polyprenylbenzoate decarboxylase</fullName>
        <ecNumber evidence="1">4.1.1.130</ecNumber>
    </alternativeName>
    <alternativeName>
        <fullName evidence="1">Coenzyme Q biosynthesis protein 4 homolog 2</fullName>
    </alternativeName>
</protein>
<organism>
    <name type="scientific">Paramecium tetraurelia</name>
    <dbReference type="NCBI Taxonomy" id="5888"/>
    <lineage>
        <taxon>Eukaryota</taxon>
        <taxon>Sar</taxon>
        <taxon>Alveolata</taxon>
        <taxon>Ciliophora</taxon>
        <taxon>Intramacronucleata</taxon>
        <taxon>Oligohymenophorea</taxon>
        <taxon>Peniculida</taxon>
        <taxon>Parameciidae</taxon>
        <taxon>Paramecium</taxon>
    </lineage>
</organism>
<name>COQ42_PARTE</name>
<sequence>MRHQCIQIPFKVNLLNKYFISGNHLSQLGELSGYYCVKDIHQRMLQHPIGQRILNDKPRVTPQTFKIEELLKLDENTFGHQYGKFMKDRDFSSGERPIVKYIPDLELAYVYQRYKEIHDFIHVLLMYDVSVYDEIVVKWFEMAQLGLPSATLSAFVGSFKLNCQEKQKLMETLPQILKRAHKSEFIMNVYFEEHINTDITQLRKSLRLL</sequence>
<dbReference type="EC" id="4.1.1.130" evidence="1"/>
<dbReference type="EMBL" id="CT868659">
    <property type="protein sequence ID" value="CAK90380.1"/>
    <property type="molecule type" value="Genomic_DNA"/>
</dbReference>
<dbReference type="RefSeq" id="XP_001457777.1">
    <property type="nucleotide sequence ID" value="XM_001457740.2"/>
</dbReference>
<dbReference type="SMR" id="A0E513"/>
<dbReference type="STRING" id="5888.A0E513"/>
<dbReference type="EnsemblProtists" id="CAK90380">
    <property type="protein sequence ID" value="CAK90380"/>
    <property type="gene ID" value="GSPATT00023557001"/>
</dbReference>
<dbReference type="GeneID" id="5043562"/>
<dbReference type="KEGG" id="ptm:GSPATT00023557001"/>
<dbReference type="eggNOG" id="KOG3244">
    <property type="taxonomic scope" value="Eukaryota"/>
</dbReference>
<dbReference type="HOGENOM" id="CLU_061241_1_1_1"/>
<dbReference type="InParanoid" id="A0E513"/>
<dbReference type="OMA" id="WFEMINT"/>
<dbReference type="OrthoDB" id="4249at2759"/>
<dbReference type="UniPathway" id="UPA00232"/>
<dbReference type="Proteomes" id="UP000000600">
    <property type="component" value="Partially assembled WGS sequence"/>
</dbReference>
<dbReference type="GO" id="GO:0031314">
    <property type="term" value="C:extrinsic component of mitochondrial inner membrane"/>
    <property type="evidence" value="ECO:0007669"/>
    <property type="project" value="UniProtKB-UniRule"/>
</dbReference>
<dbReference type="GO" id="GO:0006744">
    <property type="term" value="P:ubiquinone biosynthetic process"/>
    <property type="evidence" value="ECO:0007669"/>
    <property type="project" value="UniProtKB-UniRule"/>
</dbReference>
<dbReference type="HAMAP" id="MF_03111">
    <property type="entry name" value="Coq4"/>
    <property type="match status" value="1"/>
</dbReference>
<dbReference type="InterPro" id="IPR007715">
    <property type="entry name" value="Coq4"/>
</dbReference>
<dbReference type="InterPro" id="IPR027540">
    <property type="entry name" value="Coq4_euk"/>
</dbReference>
<dbReference type="PANTHER" id="PTHR12922">
    <property type="entry name" value="UBIQUINONE BIOSYNTHESIS PROTEIN"/>
    <property type="match status" value="1"/>
</dbReference>
<dbReference type="PANTHER" id="PTHR12922:SF7">
    <property type="entry name" value="UBIQUINONE BIOSYNTHESIS PROTEIN COQ4 HOMOLOG, MITOCHONDRIAL"/>
    <property type="match status" value="1"/>
</dbReference>
<dbReference type="Pfam" id="PF05019">
    <property type="entry name" value="Coq4"/>
    <property type="match status" value="1"/>
</dbReference>
<keyword id="KW-0456">Lyase</keyword>
<keyword id="KW-0472">Membrane</keyword>
<keyword id="KW-0479">Metal-binding</keyword>
<keyword id="KW-0496">Mitochondrion</keyword>
<keyword id="KW-0999">Mitochondrion inner membrane</keyword>
<keyword id="KW-1185">Reference proteome</keyword>
<keyword id="KW-0831">Ubiquinone biosynthesis</keyword>
<keyword id="KW-0862">Zinc</keyword>
<comment type="function">
    <text evidence="1">Lyase that catalyzes the C1-decarboxylation of 4-hydroxy-3-methoxy-5-(all-trans-polyprenyl)benzoic acid into 2-methoxy-6-(all-trans-polyprenyl)phenol during ubiquinone biosynthesis.</text>
</comment>
<comment type="catalytic activity">
    <reaction evidence="1">
        <text>a 4-hydroxy-3-methoxy-5-(all-trans-polyprenyl)benzoate + H(+) = a 2-methoxy-6-(all-trans-polyprenyl)phenol + CO2</text>
        <dbReference type="Rhea" id="RHEA:81179"/>
        <dbReference type="Rhea" id="RHEA-COMP:9551"/>
        <dbReference type="Rhea" id="RHEA-COMP:10931"/>
        <dbReference type="ChEBI" id="CHEBI:15378"/>
        <dbReference type="ChEBI" id="CHEBI:16526"/>
        <dbReference type="ChEBI" id="CHEBI:62731"/>
        <dbReference type="ChEBI" id="CHEBI:84443"/>
        <dbReference type="EC" id="4.1.1.130"/>
    </reaction>
</comment>
<comment type="cofactor">
    <cofactor evidence="1">
        <name>Zn(2+)</name>
        <dbReference type="ChEBI" id="CHEBI:29105"/>
    </cofactor>
</comment>
<comment type="pathway">
    <text evidence="1">Cofactor biosynthesis; ubiquinone biosynthesis.</text>
</comment>
<comment type="subunit">
    <text evidence="1">Component of a multi-subunit COQ enzyme complex.</text>
</comment>
<comment type="subcellular location">
    <subcellularLocation>
        <location evidence="1">Mitochondrion inner membrane</location>
        <topology evidence="1">Peripheral membrane protein</topology>
        <orientation evidence="1">Matrix side</orientation>
    </subcellularLocation>
</comment>
<comment type="miscellaneous">
    <text evidence="1">This protein may be expected to contain an N-terminal transit peptide but none has been predicted.</text>
</comment>
<comment type="similarity">
    <text evidence="1">Belongs to the COQ4 family.</text>
</comment>
<feature type="chain" id="PRO_0000388077" description="Ubiquinone biosynthesis protein COQ4 homolog 2, mitochondrial">
    <location>
        <begin position="1"/>
        <end position="209"/>
    </location>
</feature>
<feature type="binding site" evidence="1">
    <location>
        <position position="118"/>
    </location>
    <ligand>
        <name>Zn(2+)</name>
        <dbReference type="ChEBI" id="CHEBI:29105"/>
    </ligand>
</feature>
<feature type="binding site" evidence="1">
    <location>
        <position position="119"/>
    </location>
    <ligand>
        <name>Zn(2+)</name>
        <dbReference type="ChEBI" id="CHEBI:29105"/>
    </ligand>
</feature>
<feature type="binding site" evidence="1">
    <location>
        <position position="122"/>
    </location>
    <ligand>
        <name>Zn(2+)</name>
        <dbReference type="ChEBI" id="CHEBI:29105"/>
    </ligand>
</feature>
<feature type="binding site" evidence="1">
    <location>
        <position position="134"/>
    </location>
    <ligand>
        <name>Zn(2+)</name>
        <dbReference type="ChEBI" id="CHEBI:29105"/>
    </ligand>
</feature>
<reference key="1">
    <citation type="journal article" date="2006" name="Nature">
        <title>Global trends of whole-genome duplications revealed by the ciliate Paramecium tetraurelia.</title>
        <authorList>
            <person name="Aury J.-M."/>
            <person name="Jaillon O."/>
            <person name="Duret L."/>
            <person name="Noel B."/>
            <person name="Jubin C."/>
            <person name="Porcel B.M."/>
            <person name="Segurens B."/>
            <person name="Daubin V."/>
            <person name="Anthouard V."/>
            <person name="Aiach N."/>
            <person name="Arnaiz O."/>
            <person name="Billaut A."/>
            <person name="Beisson J."/>
            <person name="Blanc I."/>
            <person name="Bouhouche K."/>
            <person name="Camara F."/>
            <person name="Duharcourt S."/>
            <person name="Guigo R."/>
            <person name="Gogendeau D."/>
            <person name="Katinka M."/>
            <person name="Keller A.-M."/>
            <person name="Kissmehl R."/>
            <person name="Klotz C."/>
            <person name="Koll F."/>
            <person name="Le Mouel A."/>
            <person name="Lepere G."/>
            <person name="Malinsky S."/>
            <person name="Nowacki M."/>
            <person name="Nowak J.K."/>
            <person name="Plattner H."/>
            <person name="Poulain J."/>
            <person name="Ruiz F."/>
            <person name="Serrano V."/>
            <person name="Zagulski M."/>
            <person name="Dessen P."/>
            <person name="Betermier M."/>
            <person name="Weissenbach J."/>
            <person name="Scarpelli C."/>
            <person name="Schaechter V."/>
            <person name="Sperling L."/>
            <person name="Meyer E."/>
            <person name="Cohen J."/>
            <person name="Wincker P."/>
        </authorList>
    </citation>
    <scope>NUCLEOTIDE SEQUENCE [LARGE SCALE GENOMIC DNA]</scope>
    <source>
        <strain>Stock d4-2</strain>
    </source>
</reference>
<accession>A0E513</accession>
<gene>
    <name type="ORF">GSPATT00023557001</name>
</gene>